<organism>
    <name type="scientific">Streptococcus equi subsp. zooepidemicus (strain H70)</name>
    <dbReference type="NCBI Taxonomy" id="553483"/>
    <lineage>
        <taxon>Bacteria</taxon>
        <taxon>Bacillati</taxon>
        <taxon>Bacillota</taxon>
        <taxon>Bacilli</taxon>
        <taxon>Lactobacillales</taxon>
        <taxon>Streptococcaceae</taxon>
        <taxon>Streptococcus</taxon>
    </lineage>
</organism>
<evidence type="ECO:0000255" key="1">
    <source>
        <dbReference type="HAMAP-Rule" id="MF_00182"/>
    </source>
</evidence>
<comment type="function">
    <text evidence="1">Attaches a formyl group to the free amino group of methionyl-tRNA(fMet). The formyl group appears to play a dual role in the initiator identity of N-formylmethionyl-tRNA by promoting its recognition by IF2 and preventing the misappropriation of this tRNA by the elongation apparatus.</text>
</comment>
<comment type="catalytic activity">
    <reaction evidence="1">
        <text>L-methionyl-tRNA(fMet) + (6R)-10-formyltetrahydrofolate = N-formyl-L-methionyl-tRNA(fMet) + (6S)-5,6,7,8-tetrahydrofolate + H(+)</text>
        <dbReference type="Rhea" id="RHEA:24380"/>
        <dbReference type="Rhea" id="RHEA-COMP:9952"/>
        <dbReference type="Rhea" id="RHEA-COMP:9953"/>
        <dbReference type="ChEBI" id="CHEBI:15378"/>
        <dbReference type="ChEBI" id="CHEBI:57453"/>
        <dbReference type="ChEBI" id="CHEBI:78530"/>
        <dbReference type="ChEBI" id="CHEBI:78844"/>
        <dbReference type="ChEBI" id="CHEBI:195366"/>
        <dbReference type="EC" id="2.1.2.9"/>
    </reaction>
</comment>
<comment type="similarity">
    <text evidence="1">Belongs to the Fmt family.</text>
</comment>
<dbReference type="EC" id="2.1.2.9" evidence="1"/>
<dbReference type="EMBL" id="FM204884">
    <property type="protein sequence ID" value="CAW98292.1"/>
    <property type="molecule type" value="Genomic_DNA"/>
</dbReference>
<dbReference type="SMR" id="C0MH30"/>
<dbReference type="KEGG" id="seq:SZO_04060"/>
<dbReference type="eggNOG" id="COG0223">
    <property type="taxonomic scope" value="Bacteria"/>
</dbReference>
<dbReference type="HOGENOM" id="CLU_033347_1_1_9"/>
<dbReference type="Proteomes" id="UP000001368">
    <property type="component" value="Chromosome"/>
</dbReference>
<dbReference type="GO" id="GO:0005829">
    <property type="term" value="C:cytosol"/>
    <property type="evidence" value="ECO:0007669"/>
    <property type="project" value="TreeGrafter"/>
</dbReference>
<dbReference type="GO" id="GO:0004479">
    <property type="term" value="F:methionyl-tRNA formyltransferase activity"/>
    <property type="evidence" value="ECO:0007669"/>
    <property type="project" value="UniProtKB-UniRule"/>
</dbReference>
<dbReference type="CDD" id="cd08646">
    <property type="entry name" value="FMT_core_Met-tRNA-FMT_N"/>
    <property type="match status" value="1"/>
</dbReference>
<dbReference type="CDD" id="cd08704">
    <property type="entry name" value="Met_tRNA_FMT_C"/>
    <property type="match status" value="1"/>
</dbReference>
<dbReference type="FunFam" id="3.40.50.170:FF:000004">
    <property type="entry name" value="Methionyl-tRNA formyltransferase"/>
    <property type="match status" value="1"/>
</dbReference>
<dbReference type="Gene3D" id="3.10.25.10">
    <property type="entry name" value="Formyl transferase, C-terminal domain"/>
    <property type="match status" value="1"/>
</dbReference>
<dbReference type="Gene3D" id="3.40.50.170">
    <property type="entry name" value="Formyl transferase, N-terminal domain"/>
    <property type="match status" value="1"/>
</dbReference>
<dbReference type="HAMAP" id="MF_00182">
    <property type="entry name" value="Formyl_trans"/>
    <property type="match status" value="1"/>
</dbReference>
<dbReference type="InterPro" id="IPR005794">
    <property type="entry name" value="Fmt"/>
</dbReference>
<dbReference type="InterPro" id="IPR005793">
    <property type="entry name" value="Formyl_trans_C"/>
</dbReference>
<dbReference type="InterPro" id="IPR037022">
    <property type="entry name" value="Formyl_trans_C_sf"/>
</dbReference>
<dbReference type="InterPro" id="IPR002376">
    <property type="entry name" value="Formyl_transf_N"/>
</dbReference>
<dbReference type="InterPro" id="IPR036477">
    <property type="entry name" value="Formyl_transf_N_sf"/>
</dbReference>
<dbReference type="InterPro" id="IPR011034">
    <property type="entry name" value="Formyl_transferase-like_C_sf"/>
</dbReference>
<dbReference type="InterPro" id="IPR001555">
    <property type="entry name" value="GART_AS"/>
</dbReference>
<dbReference type="InterPro" id="IPR044135">
    <property type="entry name" value="Met-tRNA-FMT_C"/>
</dbReference>
<dbReference type="InterPro" id="IPR041711">
    <property type="entry name" value="Met-tRNA-FMT_N"/>
</dbReference>
<dbReference type="NCBIfam" id="TIGR00460">
    <property type="entry name" value="fmt"/>
    <property type="match status" value="1"/>
</dbReference>
<dbReference type="PANTHER" id="PTHR11138">
    <property type="entry name" value="METHIONYL-TRNA FORMYLTRANSFERASE"/>
    <property type="match status" value="1"/>
</dbReference>
<dbReference type="PANTHER" id="PTHR11138:SF5">
    <property type="entry name" value="METHIONYL-TRNA FORMYLTRANSFERASE, MITOCHONDRIAL"/>
    <property type="match status" value="1"/>
</dbReference>
<dbReference type="Pfam" id="PF02911">
    <property type="entry name" value="Formyl_trans_C"/>
    <property type="match status" value="1"/>
</dbReference>
<dbReference type="Pfam" id="PF00551">
    <property type="entry name" value="Formyl_trans_N"/>
    <property type="match status" value="1"/>
</dbReference>
<dbReference type="SUPFAM" id="SSF50486">
    <property type="entry name" value="FMT C-terminal domain-like"/>
    <property type="match status" value="1"/>
</dbReference>
<dbReference type="SUPFAM" id="SSF53328">
    <property type="entry name" value="Formyltransferase"/>
    <property type="match status" value="1"/>
</dbReference>
<dbReference type="PROSITE" id="PS00373">
    <property type="entry name" value="GART"/>
    <property type="match status" value="1"/>
</dbReference>
<protein>
    <recommendedName>
        <fullName evidence="1">Methionyl-tRNA formyltransferase</fullName>
        <ecNumber evidence="1">2.1.2.9</ecNumber>
    </recommendedName>
</protein>
<gene>
    <name evidence="1" type="primary">fmt</name>
    <name type="ordered locus">SZO_04060</name>
</gene>
<proteinExistence type="inferred from homology"/>
<name>FMT_STRS7</name>
<feature type="chain" id="PRO_1000203876" description="Methionyl-tRNA formyltransferase">
    <location>
        <begin position="1"/>
        <end position="311"/>
    </location>
</feature>
<feature type="binding site" evidence="1">
    <location>
        <begin position="110"/>
        <end position="113"/>
    </location>
    <ligand>
        <name>(6S)-5,6,7,8-tetrahydrofolate</name>
        <dbReference type="ChEBI" id="CHEBI:57453"/>
    </ligand>
</feature>
<keyword id="KW-0648">Protein biosynthesis</keyword>
<keyword id="KW-0808">Transferase</keyword>
<accession>C0MH30</accession>
<reference key="1">
    <citation type="journal article" date="2009" name="PLoS Pathog.">
        <title>Genomic evidence for the evolution of Streptococcus equi: host restriction, increased virulence, and genetic exchange with human pathogens.</title>
        <authorList>
            <person name="Holden M.T.G."/>
            <person name="Heather Z."/>
            <person name="Paillot R."/>
            <person name="Steward K.F."/>
            <person name="Webb K."/>
            <person name="Ainslie F."/>
            <person name="Jourdan T."/>
            <person name="Bason N.C."/>
            <person name="Holroyd N.E."/>
            <person name="Mungall K."/>
            <person name="Quail M.A."/>
            <person name="Sanders M."/>
            <person name="Simmonds M."/>
            <person name="Willey D."/>
            <person name="Brooks K."/>
            <person name="Aanensen D.M."/>
            <person name="Spratt B.G."/>
            <person name="Jolley K.A."/>
            <person name="Maiden M.C.J."/>
            <person name="Kehoe M."/>
            <person name="Chanter N."/>
            <person name="Bentley S.D."/>
            <person name="Robinson C."/>
            <person name="Maskell D.J."/>
            <person name="Parkhill J."/>
            <person name="Waller A.S."/>
        </authorList>
    </citation>
    <scope>NUCLEOTIDE SEQUENCE [LARGE SCALE GENOMIC DNA]</scope>
    <source>
        <strain>H70</strain>
    </source>
</reference>
<sequence>MTRLIFMGTPQFSATVLQGLLENPAYDILAVVTQPDRAVGRKKDITMTPVKKLALAHQLPVFQPEKLSGSQELADIMALGADGIVTAAFGQFLPTVLLDSVTFAVNVHASLLPKYRGGAPIHYAIINGDKEAGVTIMEMVKEMDAGDMISSASLPILDTDNVGTMFDKLAILGRDLLLKTLPDYLSGDLKPVPQDHSQATFSPNLSAEEERLDWSKPAREVFNHIRGMNPWPVAHTLLDGQRFKIYEAELAEGSGSAGQIIAKTKKALVVAAGEGALSLTLVQPAGKPKMPIVDFLNGIGRSLEVGDVLGE</sequence>